<comment type="catalytic activity">
    <reaction evidence="2">
        <text>alpha-D-galactose 1-phosphate + UDP-alpha-D-glucose = alpha-D-glucose 1-phosphate + UDP-alpha-D-galactose</text>
        <dbReference type="Rhea" id="RHEA:13989"/>
        <dbReference type="ChEBI" id="CHEBI:58336"/>
        <dbReference type="ChEBI" id="CHEBI:58601"/>
        <dbReference type="ChEBI" id="CHEBI:58885"/>
        <dbReference type="ChEBI" id="CHEBI:66914"/>
        <dbReference type="EC" id="2.7.7.12"/>
    </reaction>
</comment>
<comment type="cofactor">
    <cofactor evidence="2">
        <name>Zn(2+)</name>
        <dbReference type="ChEBI" id="CHEBI:29105"/>
    </cofactor>
    <text evidence="2">Binds 1 zinc ion per subunit. Zinc binding seems to play a structural role.</text>
</comment>
<comment type="pathway">
    <text>Carbohydrate metabolism; galactose metabolism.</text>
</comment>
<comment type="subunit">
    <text evidence="1">Homodimer.</text>
</comment>
<comment type="similarity">
    <text evidence="4">Belongs to the galactose-1-phosphate uridylyltransferase type 1 family.</text>
</comment>
<protein>
    <recommendedName>
        <fullName>Galactose-1-phosphate uridylyltransferase</fullName>
        <shortName>Gal-1-P uridylyltransferase</shortName>
        <ecNumber evidence="2">2.7.7.12</ecNumber>
    </recommendedName>
    <alternativeName>
        <fullName>UDP-glucose--hexose-1-phosphate uridylyltransferase</fullName>
    </alternativeName>
</protein>
<keyword id="KW-0119">Carbohydrate metabolism</keyword>
<keyword id="KW-0299">Galactose metabolism</keyword>
<keyword id="KW-0408">Iron</keyword>
<keyword id="KW-0479">Metal-binding</keyword>
<keyword id="KW-0548">Nucleotidyltransferase</keyword>
<keyword id="KW-1185">Reference proteome</keyword>
<keyword id="KW-0808">Transferase</keyword>
<keyword id="KW-0862">Zinc</keyword>
<name>GAL7_NEUCR</name>
<reference key="1">
    <citation type="journal article" date="2003" name="Nucleic Acids Res.">
        <title>What's in the genome of a filamentous fungus? Analysis of the Neurospora genome sequence.</title>
        <authorList>
            <person name="Mannhaupt G."/>
            <person name="Montrone C."/>
            <person name="Haase D."/>
            <person name="Mewes H.-W."/>
            <person name="Aign V."/>
            <person name="Hoheisel J.D."/>
            <person name="Fartmann B."/>
            <person name="Nyakatura G."/>
            <person name="Kempken F."/>
            <person name="Maier J."/>
            <person name="Schulte U."/>
        </authorList>
    </citation>
    <scope>NUCLEOTIDE SEQUENCE [LARGE SCALE GENOMIC DNA]</scope>
    <source>
        <strain>ATCC 24698 / 74-OR23-1A / CBS 708.71 / DSM 1257 / FGSC 987</strain>
    </source>
</reference>
<reference key="2">
    <citation type="journal article" date="2003" name="Nature">
        <title>The genome sequence of the filamentous fungus Neurospora crassa.</title>
        <authorList>
            <person name="Galagan J.E."/>
            <person name="Calvo S.E."/>
            <person name="Borkovich K.A."/>
            <person name="Selker E.U."/>
            <person name="Read N.D."/>
            <person name="Jaffe D.B."/>
            <person name="FitzHugh W."/>
            <person name="Ma L.-J."/>
            <person name="Smirnov S."/>
            <person name="Purcell S."/>
            <person name="Rehman B."/>
            <person name="Elkins T."/>
            <person name="Engels R."/>
            <person name="Wang S."/>
            <person name="Nielsen C.B."/>
            <person name="Butler J."/>
            <person name="Endrizzi M."/>
            <person name="Qui D."/>
            <person name="Ianakiev P."/>
            <person name="Bell-Pedersen D."/>
            <person name="Nelson M.A."/>
            <person name="Werner-Washburne M."/>
            <person name="Selitrennikoff C.P."/>
            <person name="Kinsey J.A."/>
            <person name="Braun E.L."/>
            <person name="Zelter A."/>
            <person name="Schulte U."/>
            <person name="Kothe G.O."/>
            <person name="Jedd G."/>
            <person name="Mewes H.-W."/>
            <person name="Staben C."/>
            <person name="Marcotte E."/>
            <person name="Greenberg D."/>
            <person name="Roy A."/>
            <person name="Foley K."/>
            <person name="Naylor J."/>
            <person name="Stange-Thomann N."/>
            <person name="Barrett R."/>
            <person name="Gnerre S."/>
            <person name="Kamal M."/>
            <person name="Kamvysselis M."/>
            <person name="Mauceli E.W."/>
            <person name="Bielke C."/>
            <person name="Rudd S."/>
            <person name="Frishman D."/>
            <person name="Krystofova S."/>
            <person name="Rasmussen C."/>
            <person name="Metzenberg R.L."/>
            <person name="Perkins D.D."/>
            <person name="Kroken S."/>
            <person name="Cogoni C."/>
            <person name="Macino G."/>
            <person name="Catcheside D.E.A."/>
            <person name="Li W."/>
            <person name="Pratt R.J."/>
            <person name="Osmani S.A."/>
            <person name="DeSouza C.P.C."/>
            <person name="Glass N.L."/>
            <person name="Orbach M.J."/>
            <person name="Berglund J.A."/>
            <person name="Voelker R."/>
            <person name="Yarden O."/>
            <person name="Plamann M."/>
            <person name="Seiler S."/>
            <person name="Dunlap J.C."/>
            <person name="Radford A."/>
            <person name="Aramayo R."/>
            <person name="Natvig D.O."/>
            <person name="Alex L.A."/>
            <person name="Mannhaupt G."/>
            <person name="Ebbole D.J."/>
            <person name="Freitag M."/>
            <person name="Paulsen I."/>
            <person name="Sachs M.S."/>
            <person name="Lander E.S."/>
            <person name="Nusbaum C."/>
            <person name="Birren B.W."/>
        </authorList>
    </citation>
    <scope>NUCLEOTIDE SEQUENCE [LARGE SCALE GENOMIC DNA]</scope>
    <source>
        <strain>ATCC 24698 / 74-OR23-1A / CBS 708.71 / DSM 1257 / FGSC 987</strain>
    </source>
</reference>
<sequence>MTDKVLDDISHRRYNPLNGSWLLVSPHRTKRPWQGQQEAPALNKLPEYDPQCYLCPGNKRAQGDSNPHYKNTFAFVNDYSAVKEEQQEYHPRKDAAGDGDDDIASLLLQAQPATGRCYVLTFSAKHDTTLADMSATEIVPVIETWTRIYASHLSASHPLRDAAARSLSEIPPNPDGEVEPAKKQQLRYMQIFENKGAAMGCSNPHPHCQIWTTSTLPEEPGKELAQMTKYHREHKGRHLLEDYVKVEMAKGERVVWQNDGFLVVCPWWAVWPFEVLVIAKRHVRALVELTSEERLQFAEAVQEVTRRYDNLFETNFPYSSGIHQAPLDCTEEEAETSWFHMHFYPPLLRSATVRKFLVGYELMAEPQRDITPEQAAARLRDCGGELYRKSLQ</sequence>
<dbReference type="EC" id="2.7.7.12" evidence="2"/>
<dbReference type="EMBL" id="BX908808">
    <property type="protein sequence ID" value="CAF05986.1"/>
    <property type="molecule type" value="Genomic_DNA"/>
</dbReference>
<dbReference type="EMBL" id="CM002239">
    <property type="protein sequence ID" value="EAA27793.1"/>
    <property type="molecule type" value="Genomic_DNA"/>
</dbReference>
<dbReference type="RefSeq" id="XP_957029.1">
    <property type="nucleotide sequence ID" value="XM_951936.2"/>
</dbReference>
<dbReference type="SMR" id="Q7RYE7"/>
<dbReference type="FunCoup" id="Q7RYE7">
    <property type="interactions" value="368"/>
</dbReference>
<dbReference type="STRING" id="367110.Q7RYE7"/>
<dbReference type="PaxDb" id="5141-EFNCRP00000005235"/>
<dbReference type="EnsemblFungi" id="EAA27793">
    <property type="protein sequence ID" value="EAA27793"/>
    <property type="gene ID" value="NCU04460"/>
</dbReference>
<dbReference type="GeneID" id="3873213"/>
<dbReference type="KEGG" id="ncr:NCU04460"/>
<dbReference type="VEuPathDB" id="FungiDB:NCU04460"/>
<dbReference type="HOGENOM" id="CLU_029960_0_0_1"/>
<dbReference type="InParanoid" id="Q7RYE7"/>
<dbReference type="OMA" id="CFENRGA"/>
<dbReference type="OrthoDB" id="418412at2759"/>
<dbReference type="UniPathway" id="UPA00214"/>
<dbReference type="Proteomes" id="UP000001805">
    <property type="component" value="Chromosome 4, Linkage Group IV"/>
</dbReference>
<dbReference type="GO" id="GO:0005737">
    <property type="term" value="C:cytoplasm"/>
    <property type="evidence" value="ECO:0000318"/>
    <property type="project" value="GO_Central"/>
</dbReference>
<dbReference type="GO" id="GO:0008108">
    <property type="term" value="F:UDP-glucose:hexose-1-phosphate uridylyltransferase activity"/>
    <property type="evidence" value="ECO:0000318"/>
    <property type="project" value="GO_Central"/>
</dbReference>
<dbReference type="GO" id="GO:0008270">
    <property type="term" value="F:zinc ion binding"/>
    <property type="evidence" value="ECO:0007669"/>
    <property type="project" value="InterPro"/>
</dbReference>
<dbReference type="GO" id="GO:0033499">
    <property type="term" value="P:galactose catabolic process via UDP-galactose, Leloir pathway"/>
    <property type="evidence" value="ECO:0000318"/>
    <property type="project" value="GO_Central"/>
</dbReference>
<dbReference type="CDD" id="cd00608">
    <property type="entry name" value="GalT"/>
    <property type="match status" value="1"/>
</dbReference>
<dbReference type="FunFam" id="3.30.428.10:FF:000001">
    <property type="entry name" value="Galactose-1-phosphate uridylyltransferase"/>
    <property type="match status" value="1"/>
</dbReference>
<dbReference type="FunFam" id="3.30.428.10:FF:000009">
    <property type="entry name" value="Galactose-1-phosphate uridylyltransferase"/>
    <property type="match status" value="1"/>
</dbReference>
<dbReference type="Gene3D" id="3.30.428.10">
    <property type="entry name" value="HIT-like"/>
    <property type="match status" value="2"/>
</dbReference>
<dbReference type="InterPro" id="IPR001937">
    <property type="entry name" value="GalP_UDPtransf1"/>
</dbReference>
<dbReference type="InterPro" id="IPR019779">
    <property type="entry name" value="GalP_UDPtransf1_His-AS"/>
</dbReference>
<dbReference type="InterPro" id="IPR005850">
    <property type="entry name" value="GalP_Utransf_C"/>
</dbReference>
<dbReference type="InterPro" id="IPR005849">
    <property type="entry name" value="GalP_Utransf_N"/>
</dbReference>
<dbReference type="InterPro" id="IPR036265">
    <property type="entry name" value="HIT-like_sf"/>
</dbReference>
<dbReference type="NCBIfam" id="TIGR00209">
    <property type="entry name" value="galT_1"/>
    <property type="match status" value="1"/>
</dbReference>
<dbReference type="PANTHER" id="PTHR11943">
    <property type="entry name" value="GALACTOSE-1-PHOSPHATE URIDYLYLTRANSFERASE"/>
    <property type="match status" value="1"/>
</dbReference>
<dbReference type="PANTHER" id="PTHR11943:SF1">
    <property type="entry name" value="GALACTOSE-1-PHOSPHATE URIDYLYLTRANSFERASE"/>
    <property type="match status" value="1"/>
</dbReference>
<dbReference type="Pfam" id="PF02744">
    <property type="entry name" value="GalP_UDP_tr_C"/>
    <property type="match status" value="1"/>
</dbReference>
<dbReference type="Pfam" id="PF01087">
    <property type="entry name" value="GalP_UDP_transf"/>
    <property type="match status" value="1"/>
</dbReference>
<dbReference type="PIRSF" id="PIRSF000808">
    <property type="entry name" value="GalT"/>
    <property type="match status" value="1"/>
</dbReference>
<dbReference type="SUPFAM" id="SSF54197">
    <property type="entry name" value="HIT-like"/>
    <property type="match status" value="2"/>
</dbReference>
<dbReference type="PROSITE" id="PS00117">
    <property type="entry name" value="GAL_P_UDP_TRANSF_I"/>
    <property type="match status" value="1"/>
</dbReference>
<accession>Q7RYE7</accession>
<organism>
    <name type="scientific">Neurospora crassa (strain ATCC 24698 / 74-OR23-1A / CBS 708.71 / DSM 1257 / FGSC 987)</name>
    <dbReference type="NCBI Taxonomy" id="367110"/>
    <lineage>
        <taxon>Eukaryota</taxon>
        <taxon>Fungi</taxon>
        <taxon>Dikarya</taxon>
        <taxon>Ascomycota</taxon>
        <taxon>Pezizomycotina</taxon>
        <taxon>Sordariomycetes</taxon>
        <taxon>Sordariomycetidae</taxon>
        <taxon>Sordariales</taxon>
        <taxon>Sordariaceae</taxon>
        <taxon>Neurospora</taxon>
    </lineage>
</organism>
<feature type="chain" id="PRO_0000169890" description="Galactose-1-phosphate uridylyltransferase">
    <location>
        <begin position="1"/>
        <end position="392"/>
    </location>
</feature>
<feature type="active site" description="Tele-UMP-histidine intermediate" evidence="3">
    <location>
        <position position="207"/>
    </location>
</feature>
<feature type="binding site" evidence="3">
    <location>
        <position position="52"/>
    </location>
    <ligand>
        <name>Zn(2+)</name>
        <dbReference type="ChEBI" id="CHEBI:29105"/>
    </ligand>
</feature>
<feature type="binding site" evidence="3">
    <location>
        <position position="55"/>
    </location>
    <ligand>
        <name>Zn(2+)</name>
        <dbReference type="ChEBI" id="CHEBI:29105"/>
    </ligand>
</feature>
<feature type="binding site" description="in other chain" evidence="1">
    <location>
        <position position="61"/>
    </location>
    <ligand>
        <name>UDP-alpha-D-glucose</name>
        <dbReference type="ChEBI" id="CHEBI:58885"/>
        <note>ligand shared between dimeric partners</note>
    </ligand>
</feature>
<feature type="binding site" description="in other chain" evidence="1">
    <location>
        <begin position="77"/>
        <end position="78"/>
    </location>
    <ligand>
        <name>UDP-alpha-D-glucose</name>
        <dbReference type="ChEBI" id="CHEBI:58885"/>
        <note>ligand shared between dimeric partners</note>
    </ligand>
</feature>
<feature type="binding site" evidence="3">
    <location>
        <position position="126"/>
    </location>
    <ligand>
        <name>Zn(2+)</name>
        <dbReference type="ChEBI" id="CHEBI:29105"/>
    </ligand>
</feature>
<feature type="binding site" evidence="1">
    <location>
        <position position="194"/>
    </location>
    <ligand>
        <name>UDP-alpha-D-glucose</name>
        <dbReference type="ChEBI" id="CHEBI:58885"/>
        <note>ligand shared between dimeric partners</note>
    </ligand>
</feature>
<feature type="binding site" evidence="3">
    <location>
        <position position="205"/>
    </location>
    <ligand>
        <name>Zn(2+)</name>
        <dbReference type="ChEBI" id="CHEBI:29105"/>
    </ligand>
</feature>
<feature type="binding site" description="in other chain" evidence="1">
    <location>
        <position position="209"/>
    </location>
    <ligand>
        <name>UDP-alpha-D-glucose</name>
        <dbReference type="ChEBI" id="CHEBI:58885"/>
        <note>ligand shared between dimeric partners</note>
    </ligand>
</feature>
<feature type="binding site" evidence="2">
    <location>
        <position position="223"/>
    </location>
    <ligand>
        <name>Fe cation</name>
        <dbReference type="ChEBI" id="CHEBI:24875"/>
    </ligand>
</feature>
<feature type="binding site" evidence="2">
    <location>
        <position position="323"/>
    </location>
    <ligand>
        <name>Fe cation</name>
        <dbReference type="ChEBI" id="CHEBI:24875"/>
    </ligand>
</feature>
<feature type="binding site" evidence="2">
    <location>
        <position position="340"/>
    </location>
    <ligand>
        <name>Fe cation</name>
        <dbReference type="ChEBI" id="CHEBI:24875"/>
    </ligand>
</feature>
<feature type="binding site" evidence="2">
    <location>
        <position position="342"/>
    </location>
    <ligand>
        <name>Fe cation</name>
        <dbReference type="ChEBI" id="CHEBI:24875"/>
    </ligand>
</feature>
<feature type="binding site" description="in other chain" evidence="1">
    <location>
        <begin position="355"/>
        <end position="358"/>
    </location>
    <ligand>
        <name>UDP-alpha-D-glucose</name>
        <dbReference type="ChEBI" id="CHEBI:58885"/>
        <note>ligand shared between dimeric partners</note>
    </ligand>
</feature>
<feature type="binding site" description="in other chain" evidence="1">
    <location>
        <begin position="360"/>
        <end position="361"/>
    </location>
    <ligand>
        <name>UDP-alpha-D-glucose</name>
        <dbReference type="ChEBI" id="CHEBI:58885"/>
        <note>ligand shared between dimeric partners</note>
    </ligand>
</feature>
<gene>
    <name type="primary">gal-7</name>
    <name type="ORF">G21B4.010</name>
    <name type="ORF">NCU04460</name>
</gene>
<proteinExistence type="inferred from homology"/>
<evidence type="ECO:0000250" key="1">
    <source>
        <dbReference type="UniProtKB" id="P07902"/>
    </source>
</evidence>
<evidence type="ECO:0000250" key="2">
    <source>
        <dbReference type="UniProtKB" id="P09148"/>
    </source>
</evidence>
<evidence type="ECO:0000255" key="3">
    <source>
        <dbReference type="PROSITE-ProRule" id="PRU10033"/>
    </source>
</evidence>
<evidence type="ECO:0000305" key="4"/>